<comment type="function">
    <text evidence="1">Plasma membrane transporter mediating the uptake by cells of the water soluble vitamin B2/riboflavin that plays a key role in biochemical oxidation-reduction reactions of the carbohydrate, lipid, and amino acid metabolism. May also act as a receptor for 4-hydroxybutyrate.</text>
</comment>
<comment type="catalytic activity">
    <reaction evidence="1">
        <text>riboflavin(in) = riboflavin(out)</text>
        <dbReference type="Rhea" id="RHEA:35015"/>
        <dbReference type="ChEBI" id="CHEBI:57986"/>
    </reaction>
</comment>
<comment type="activity regulation">
    <text evidence="1">Riboflavin transport is Na(+)-independent but moderately pH-sensitive (By similarity). Activity is strongly inhibited by riboflavin analogs, such as lumiflavin (By similarity). Weakly inhibited by flavin adenine dinucleotide (FAD) and flavin mononucleotide (FMN) (By similarity).</text>
</comment>
<comment type="subcellular location">
    <subcellularLocation>
        <location evidence="4 5">Cell membrane</location>
        <topology evidence="2">Multi-pass membrane protein</topology>
    </subcellularLocation>
</comment>
<comment type="tissue specificity">
    <text evidence="4">Highly expressed in the placenta and small intestine, moderately in the kidney, colon, lung, prostate, uterus, and thymus, and weakly in all other tissues.</text>
</comment>
<comment type="similarity">
    <text evidence="6">Belongs to the riboflavin transporter family.</text>
</comment>
<sequence length="450" mass="46956">MAAPPLGRLVLTHLLVALFGMGSWIAVNGIWVELPVVVKELPEGWSLPSYLSVLVALGNLGLLLVTLWRRLAPGKSERIPIQVVQGLSIVGTGLLAPLWSNMALVAGQLHSVAFLTLAFVLALSCCASNVTFLPFLSHLPPPFLRSFFLGQGLSALLPCVLALAQGVGRLECLHVPANGTTGPPIKVSPINFPERFSAGTFFWVLTALLGTSAAAFQGLLLLLPSPPPEATMGTGLRVETPGTEEEEEEEEASPLQEPPGQVASIVSSPDPKAHRLFSSRSACLLGLLAITNALTNGVLPAVQSFSCLPYGRLAYHLAVVLGSSANPLACFLAMAVLCRSLAGLYGLCLLGMFFGTYLMTLAVLSPCPPLVGTSAGVVLVVLSWVLCAGVFSYIKVATSSMLHSGGRPALLAAGVAIQVGSLLGAIAMFPPTSVYPVFRSGEDCVDQCGP</sequence>
<name>S52A2_RAT</name>
<evidence type="ECO:0000250" key="1">
    <source>
        <dbReference type="UniProtKB" id="Q9HAB3"/>
    </source>
</evidence>
<evidence type="ECO:0000255" key="2"/>
<evidence type="ECO:0000256" key="3">
    <source>
        <dbReference type="SAM" id="MobiDB-lite"/>
    </source>
</evidence>
<evidence type="ECO:0000269" key="4">
    <source>
    </source>
</evidence>
<evidence type="ECO:0000269" key="5">
    <source>
    </source>
</evidence>
<evidence type="ECO:0000305" key="6"/>
<reference key="1">
    <citation type="journal article" date="2008" name="Am. J. Physiol.">
        <title>Identification and functional characterization of a novel human and rat riboflavin transporter, RFT1.</title>
        <authorList>
            <person name="Yonezawa A."/>
            <person name="Masuda S."/>
            <person name="Katsura T."/>
            <person name="Inui K."/>
        </authorList>
    </citation>
    <scope>NUCLEOTIDE SEQUENCE [MRNA]</scope>
    <scope>FUNCTION</scope>
    <scope>SUBCELLULAR LOCATION</scope>
    <scope>TISSUE SPECIFICITY</scope>
    <source>
        <tissue>Kidney</tissue>
    </source>
</reference>
<reference key="2">
    <citation type="submission" date="2005-09" db="EMBL/GenBank/DDBJ databases">
        <authorList>
            <person name="Mural R.J."/>
            <person name="Adams M.D."/>
            <person name="Myers E.W."/>
            <person name="Smith H.O."/>
            <person name="Venter J.C."/>
        </authorList>
    </citation>
    <scope>NUCLEOTIDE SEQUENCE [LARGE SCALE GENOMIC DNA]</scope>
</reference>
<reference key="3">
    <citation type="journal article" date="2004" name="Genome Res.">
        <title>The status, quality, and expansion of the NIH full-length cDNA project: the Mammalian Gene Collection (MGC).</title>
        <authorList>
            <consortium name="The MGC Project Team"/>
        </authorList>
    </citation>
    <scope>NUCLEOTIDE SEQUENCE [LARGE SCALE MRNA]</scope>
    <source>
        <tissue>Heart</tissue>
    </source>
</reference>
<reference key="4">
    <citation type="journal article" date="2009" name="J. Biochem.">
        <title>Identification and functional characterization of rat riboflavin transporter 2.</title>
        <authorList>
            <person name="Yamamoto S."/>
            <person name="Inoue K."/>
            <person name="Ohta K.Y."/>
            <person name="Fukatsu R."/>
            <person name="Maeda J.Y."/>
            <person name="Yoshida Y."/>
            <person name="Yuasa H."/>
        </authorList>
    </citation>
    <scope>SUBCELLULAR LOCATION</scope>
</reference>
<dbReference type="EMBL" id="AB362535">
    <property type="protein sequence ID" value="BAG71130.1"/>
    <property type="molecule type" value="mRNA"/>
</dbReference>
<dbReference type="EMBL" id="BC133726">
    <property type="protein sequence ID" value="AAI33727.1"/>
    <property type="molecule type" value="mRNA"/>
</dbReference>
<dbReference type="EMBL" id="CH473950">
    <property type="protein sequence ID" value="EDM15963.1"/>
    <property type="molecule type" value="Genomic_DNA"/>
</dbReference>
<dbReference type="RefSeq" id="NP_001103140.1">
    <property type="nucleotide sequence ID" value="NM_001109670.1"/>
</dbReference>
<dbReference type="RefSeq" id="XP_006241888.1">
    <property type="nucleotide sequence ID" value="XM_006241826.5"/>
</dbReference>
<dbReference type="RefSeq" id="XP_038935482.1">
    <property type="nucleotide sequence ID" value="XM_039079554.2"/>
</dbReference>
<dbReference type="RefSeq" id="XP_063119945.1">
    <property type="nucleotide sequence ID" value="XM_063263875.1"/>
</dbReference>
<dbReference type="SMR" id="B5MEV3"/>
<dbReference type="FunCoup" id="B5MEV3">
    <property type="interactions" value="131"/>
</dbReference>
<dbReference type="STRING" id="10116.ENSRNOP00000046721"/>
<dbReference type="GlyCosmos" id="B5MEV3">
    <property type="glycosylation" value="1 site, No reported glycans"/>
</dbReference>
<dbReference type="GlyGen" id="B5MEV3">
    <property type="glycosylation" value="1 site"/>
</dbReference>
<dbReference type="PhosphoSitePlus" id="B5MEV3"/>
<dbReference type="PaxDb" id="10116-ENSRNOP00000046721"/>
<dbReference type="Ensembl" id="ENSRNOT00000047380.5">
    <property type="protein sequence ID" value="ENSRNOP00000046721.3"/>
    <property type="gene ID" value="ENSRNOG00000032561.5"/>
</dbReference>
<dbReference type="GeneID" id="362942"/>
<dbReference type="KEGG" id="rno:362942"/>
<dbReference type="UCSC" id="RGD:1560410">
    <property type="organism name" value="rat"/>
</dbReference>
<dbReference type="AGR" id="RGD:1560410"/>
<dbReference type="CTD" id="79581"/>
<dbReference type="RGD" id="1560410">
    <property type="gene designation" value="Slc52a2"/>
</dbReference>
<dbReference type="eggNOG" id="KOG4255">
    <property type="taxonomic scope" value="Eukaryota"/>
</dbReference>
<dbReference type="GeneTree" id="ENSGT00390000003774"/>
<dbReference type="HOGENOM" id="CLU_034789_1_0_1"/>
<dbReference type="InParanoid" id="B5MEV3"/>
<dbReference type="OMA" id="SWVLCMG"/>
<dbReference type="PhylomeDB" id="B5MEV3"/>
<dbReference type="TreeFam" id="TF314820"/>
<dbReference type="Reactome" id="R-RNO-196843">
    <property type="pathway name" value="Vitamin B2 (riboflavin) metabolism"/>
</dbReference>
<dbReference type="PRO" id="PR:B5MEV3"/>
<dbReference type="Proteomes" id="UP000002494">
    <property type="component" value="Chromosome 7"/>
</dbReference>
<dbReference type="Proteomes" id="UP000234681">
    <property type="component" value="Chromosome 7"/>
</dbReference>
<dbReference type="Bgee" id="ENSRNOG00000032561">
    <property type="expression patterns" value="Expressed in jejunum and 18 other cell types or tissues"/>
</dbReference>
<dbReference type="GO" id="GO:0005886">
    <property type="term" value="C:plasma membrane"/>
    <property type="evidence" value="ECO:0000314"/>
    <property type="project" value="UniProtKB"/>
</dbReference>
<dbReference type="GO" id="GO:0062124">
    <property type="term" value="F:4-hydroxybutyrate receptor activity"/>
    <property type="evidence" value="ECO:0000250"/>
    <property type="project" value="UniProtKB"/>
</dbReference>
<dbReference type="GO" id="GO:0032217">
    <property type="term" value="F:riboflavin transmembrane transporter activity"/>
    <property type="evidence" value="ECO:0000314"/>
    <property type="project" value="UniProtKB"/>
</dbReference>
<dbReference type="GO" id="GO:0072388">
    <property type="term" value="P:flavin adenine dinucleotide biosynthetic process"/>
    <property type="evidence" value="ECO:0000266"/>
    <property type="project" value="RGD"/>
</dbReference>
<dbReference type="GO" id="GO:0006771">
    <property type="term" value="P:riboflavin metabolic process"/>
    <property type="evidence" value="ECO:0000266"/>
    <property type="project" value="RGD"/>
</dbReference>
<dbReference type="GO" id="GO:0032218">
    <property type="term" value="P:riboflavin transport"/>
    <property type="evidence" value="ECO:0000314"/>
    <property type="project" value="UniProtKB"/>
</dbReference>
<dbReference type="InterPro" id="IPR009357">
    <property type="entry name" value="Riboflavin_transptr"/>
</dbReference>
<dbReference type="PANTHER" id="PTHR12929">
    <property type="entry name" value="SOLUTE CARRIER FAMILY 52"/>
    <property type="match status" value="1"/>
</dbReference>
<dbReference type="PANTHER" id="PTHR12929:SF1">
    <property type="entry name" value="SOLUTE CARRIER FAMILY 52, RIBOFLAVIN TRANSPORTER, MEMBER 2"/>
    <property type="match status" value="1"/>
</dbReference>
<dbReference type="Pfam" id="PF06237">
    <property type="entry name" value="SLC52_ribofla_tr"/>
    <property type="match status" value="1"/>
</dbReference>
<keyword id="KW-1003">Cell membrane</keyword>
<keyword id="KW-0325">Glycoprotein</keyword>
<keyword id="KW-0472">Membrane</keyword>
<keyword id="KW-0675">Receptor</keyword>
<keyword id="KW-1185">Reference proteome</keyword>
<keyword id="KW-0812">Transmembrane</keyword>
<keyword id="KW-1133">Transmembrane helix</keyword>
<keyword id="KW-0813">Transport</keyword>
<proteinExistence type="evidence at transcript level"/>
<accession>B5MEV3</accession>
<accession>A3KN99</accession>
<gene>
    <name type="primary">Slc52a2</name>
    <name type="synonym">Gpr172a</name>
    <name type="synonym">Gpr172b</name>
    <name type="synonym">Rft1</name>
</gene>
<feature type="chain" id="PRO_0000399789" description="Solute carrier family 52, riboflavin transporter, member 2">
    <location>
        <begin position="1"/>
        <end position="450"/>
    </location>
</feature>
<feature type="transmembrane region" description="Helical" evidence="2">
    <location>
        <begin position="14"/>
        <end position="34"/>
    </location>
</feature>
<feature type="transmembrane region" description="Helical" evidence="2">
    <location>
        <begin position="47"/>
        <end position="67"/>
    </location>
</feature>
<feature type="transmembrane region" description="Helical" evidence="2">
    <location>
        <begin position="79"/>
        <end position="99"/>
    </location>
</feature>
<feature type="transmembrane region" description="Helical" evidence="2">
    <location>
        <begin position="114"/>
        <end position="136"/>
    </location>
</feature>
<feature type="transmembrane region" description="Helical" evidence="2">
    <location>
        <begin position="147"/>
        <end position="167"/>
    </location>
</feature>
<feature type="transmembrane region" description="Helical" evidence="2">
    <location>
        <begin position="201"/>
        <end position="221"/>
    </location>
</feature>
<feature type="transmembrane region" description="Helical" evidence="2">
    <location>
        <begin position="282"/>
        <end position="302"/>
    </location>
</feature>
<feature type="transmembrane region" description="Helical" evidence="2">
    <location>
        <begin position="317"/>
        <end position="337"/>
    </location>
</feature>
<feature type="transmembrane region" description="Helical" evidence="2">
    <location>
        <begin position="344"/>
        <end position="364"/>
    </location>
</feature>
<feature type="transmembrane region" description="Helical" evidence="2">
    <location>
        <begin position="371"/>
        <end position="391"/>
    </location>
</feature>
<feature type="transmembrane region" description="Helical" evidence="2">
    <location>
        <begin position="409"/>
        <end position="429"/>
    </location>
</feature>
<feature type="region of interest" description="Disordered" evidence="3">
    <location>
        <begin position="230"/>
        <end position="268"/>
    </location>
</feature>
<feature type="compositionally biased region" description="Acidic residues" evidence="3">
    <location>
        <begin position="242"/>
        <end position="252"/>
    </location>
</feature>
<feature type="glycosylation site" description="N-linked (GlcNAc...) asparagine" evidence="2">
    <location>
        <position position="178"/>
    </location>
</feature>
<feature type="sequence conflict" description="In Ref. 1; BAG71130." evidence="6" ref="1">
    <original>I</original>
    <variation>V</variation>
    <location>
        <position position="426"/>
    </location>
</feature>
<organism>
    <name type="scientific">Rattus norvegicus</name>
    <name type="common">Rat</name>
    <dbReference type="NCBI Taxonomy" id="10116"/>
    <lineage>
        <taxon>Eukaryota</taxon>
        <taxon>Metazoa</taxon>
        <taxon>Chordata</taxon>
        <taxon>Craniata</taxon>
        <taxon>Vertebrata</taxon>
        <taxon>Euteleostomi</taxon>
        <taxon>Mammalia</taxon>
        <taxon>Eutheria</taxon>
        <taxon>Euarchontoglires</taxon>
        <taxon>Glires</taxon>
        <taxon>Rodentia</taxon>
        <taxon>Myomorpha</taxon>
        <taxon>Muroidea</taxon>
        <taxon>Muridae</taxon>
        <taxon>Murinae</taxon>
        <taxon>Rattus</taxon>
    </lineage>
</organism>
<protein>
    <recommendedName>
        <fullName>Solute carrier family 52, riboflavin transporter, member 2</fullName>
    </recommendedName>
    <alternativeName>
        <fullName>Porcine endogenous retrovirus A receptor 2</fullName>
    </alternativeName>
    <alternativeName>
        <fullName>Protein GPR172B</fullName>
    </alternativeName>
    <alternativeName>
        <fullName>Riboflavin transporter 1</fullName>
        <shortName>rRFT1</shortName>
    </alternativeName>
</protein>